<sequence>MAVPRNRHSNARKNIRRSHDAKKARHAAVCNNCKQAFIPHTVCTSCGFYNGKAVMTVEKK</sequence>
<evidence type="ECO:0000255" key="1">
    <source>
        <dbReference type="HAMAP-Rule" id="MF_00340"/>
    </source>
</evidence>
<evidence type="ECO:0000256" key="2">
    <source>
        <dbReference type="SAM" id="MobiDB-lite"/>
    </source>
</evidence>
<evidence type="ECO:0000305" key="3"/>
<feature type="chain" id="PRO_0000296444" description="Large ribosomal subunit protein bL32">
    <location>
        <begin position="1"/>
        <end position="60"/>
    </location>
</feature>
<feature type="region of interest" description="Disordered" evidence="2">
    <location>
        <begin position="1"/>
        <end position="21"/>
    </location>
</feature>
<proteinExistence type="inferred from homology"/>
<accession>Q255Q9</accession>
<protein>
    <recommendedName>
        <fullName evidence="1">Large ribosomal subunit protein bL32</fullName>
    </recommendedName>
    <alternativeName>
        <fullName evidence="3">50S ribosomal protein L32</fullName>
    </alternativeName>
</protein>
<organism>
    <name type="scientific">Chlamydia felis (strain Fe/C-56)</name>
    <name type="common">Chlamydophila felis</name>
    <dbReference type="NCBI Taxonomy" id="264202"/>
    <lineage>
        <taxon>Bacteria</taxon>
        <taxon>Pseudomonadati</taxon>
        <taxon>Chlamydiota</taxon>
        <taxon>Chlamydiia</taxon>
        <taxon>Chlamydiales</taxon>
        <taxon>Chlamydiaceae</taxon>
        <taxon>Chlamydia/Chlamydophila group</taxon>
        <taxon>Chlamydia</taxon>
    </lineage>
</organism>
<comment type="similarity">
    <text evidence="1">Belongs to the bacterial ribosomal protein bL32 family.</text>
</comment>
<keyword id="KW-0687">Ribonucleoprotein</keyword>
<keyword id="KW-0689">Ribosomal protein</keyword>
<dbReference type="EMBL" id="AP006861">
    <property type="protein sequence ID" value="BAE80979.1"/>
    <property type="molecule type" value="Genomic_DNA"/>
</dbReference>
<dbReference type="RefSeq" id="WP_011457761.1">
    <property type="nucleotide sequence ID" value="NC_007899.1"/>
</dbReference>
<dbReference type="SMR" id="Q255Q9"/>
<dbReference type="STRING" id="264202.CF0207"/>
<dbReference type="KEGG" id="cfe:CF0207"/>
<dbReference type="eggNOG" id="COG0333">
    <property type="taxonomic scope" value="Bacteria"/>
</dbReference>
<dbReference type="HOGENOM" id="CLU_129084_1_3_0"/>
<dbReference type="OrthoDB" id="9812874at2"/>
<dbReference type="Proteomes" id="UP000001260">
    <property type="component" value="Chromosome"/>
</dbReference>
<dbReference type="GO" id="GO:0015934">
    <property type="term" value="C:large ribosomal subunit"/>
    <property type="evidence" value="ECO:0007669"/>
    <property type="project" value="InterPro"/>
</dbReference>
<dbReference type="GO" id="GO:0003735">
    <property type="term" value="F:structural constituent of ribosome"/>
    <property type="evidence" value="ECO:0007669"/>
    <property type="project" value="InterPro"/>
</dbReference>
<dbReference type="GO" id="GO:0006412">
    <property type="term" value="P:translation"/>
    <property type="evidence" value="ECO:0007669"/>
    <property type="project" value="UniProtKB-UniRule"/>
</dbReference>
<dbReference type="HAMAP" id="MF_00340">
    <property type="entry name" value="Ribosomal_bL32"/>
    <property type="match status" value="1"/>
</dbReference>
<dbReference type="InterPro" id="IPR002677">
    <property type="entry name" value="Ribosomal_bL32"/>
</dbReference>
<dbReference type="InterPro" id="IPR044957">
    <property type="entry name" value="Ribosomal_bL32_bact"/>
</dbReference>
<dbReference type="InterPro" id="IPR011332">
    <property type="entry name" value="Ribosomal_zn-bd"/>
</dbReference>
<dbReference type="NCBIfam" id="TIGR01031">
    <property type="entry name" value="rpmF_bact"/>
    <property type="match status" value="1"/>
</dbReference>
<dbReference type="PANTHER" id="PTHR35534">
    <property type="entry name" value="50S RIBOSOMAL PROTEIN L32"/>
    <property type="match status" value="1"/>
</dbReference>
<dbReference type="PANTHER" id="PTHR35534:SF1">
    <property type="entry name" value="LARGE RIBOSOMAL SUBUNIT PROTEIN BL32"/>
    <property type="match status" value="1"/>
</dbReference>
<dbReference type="Pfam" id="PF01783">
    <property type="entry name" value="Ribosomal_L32p"/>
    <property type="match status" value="1"/>
</dbReference>
<dbReference type="SUPFAM" id="SSF57829">
    <property type="entry name" value="Zn-binding ribosomal proteins"/>
    <property type="match status" value="1"/>
</dbReference>
<gene>
    <name evidence="1" type="primary">rpmF</name>
    <name type="ordered locus">CF0207</name>
</gene>
<name>RL32_CHLFF</name>
<reference key="1">
    <citation type="journal article" date="2006" name="DNA Res.">
        <title>Genome sequence of the cat pathogen, Chlamydophila felis.</title>
        <authorList>
            <person name="Azuma Y."/>
            <person name="Hirakawa H."/>
            <person name="Yamashita A."/>
            <person name="Cai Y."/>
            <person name="Rahman M.A."/>
            <person name="Suzuki H."/>
            <person name="Mitaku S."/>
            <person name="Toh H."/>
            <person name="Goto S."/>
            <person name="Murakami T."/>
            <person name="Sugi K."/>
            <person name="Hayashi H."/>
            <person name="Fukushi H."/>
            <person name="Hattori M."/>
            <person name="Kuhara S."/>
            <person name="Shirai M."/>
        </authorList>
    </citation>
    <scope>NUCLEOTIDE SEQUENCE [LARGE SCALE GENOMIC DNA]</scope>
    <source>
        <strain>Fe/C-56</strain>
    </source>
</reference>